<proteinExistence type="evidence at protein level"/>
<feature type="chain" id="PRO_0000426010" description="Tetratricopeptide repeat protein 17">
    <location>
        <begin position="1"/>
        <end position="1198"/>
    </location>
</feature>
<feature type="repeat" description="TPR 1">
    <location>
        <begin position="295"/>
        <end position="328"/>
    </location>
</feature>
<feature type="repeat" description="TPR 2">
    <location>
        <begin position="619"/>
        <end position="652"/>
    </location>
</feature>
<feature type="repeat" description="TPR 3">
    <location>
        <begin position="689"/>
        <end position="722"/>
    </location>
</feature>
<feature type="repeat" description="TPR 4">
    <location>
        <begin position="1071"/>
        <end position="1105"/>
    </location>
</feature>
<feature type="repeat" description="TPR 5">
    <location>
        <begin position="1108"/>
        <end position="1141"/>
    </location>
</feature>
<feature type="repeat" description="TPR 6">
    <location>
        <begin position="1142"/>
        <end position="1175"/>
    </location>
</feature>
<feature type="region of interest" description="Disordered" evidence="3">
    <location>
        <begin position="774"/>
        <end position="793"/>
    </location>
</feature>
<feature type="region of interest" description="Disordered" evidence="3">
    <location>
        <begin position="902"/>
        <end position="954"/>
    </location>
</feature>
<feature type="coiled-coil region" evidence="2">
    <location>
        <begin position="340"/>
        <end position="382"/>
    </location>
</feature>
<feature type="compositionally biased region" description="Basic residues" evidence="3">
    <location>
        <begin position="902"/>
        <end position="914"/>
    </location>
</feature>
<feature type="splice variant" id="VSP_053920" description="In isoform 2." evidence="4">
    <location>
        <begin position="752"/>
        <end position="808"/>
    </location>
</feature>
<feature type="sequence conflict" description="In Ref. 2; AAH61503/AAH95993." evidence="5" ref="2">
    <original>E</original>
    <variation>K</variation>
    <location>
        <position position="825"/>
    </location>
</feature>
<protein>
    <recommendedName>
        <fullName>Tetratricopeptide repeat protein 17</fullName>
        <shortName>TPR repeat protein 17</shortName>
    </recommendedName>
</protein>
<name>TTC17_MOUSE</name>
<organism>
    <name type="scientific">Mus musculus</name>
    <name type="common">Mouse</name>
    <dbReference type="NCBI Taxonomy" id="10090"/>
    <lineage>
        <taxon>Eukaryota</taxon>
        <taxon>Metazoa</taxon>
        <taxon>Chordata</taxon>
        <taxon>Craniata</taxon>
        <taxon>Vertebrata</taxon>
        <taxon>Euteleostomi</taxon>
        <taxon>Mammalia</taxon>
        <taxon>Eutheria</taxon>
        <taxon>Euarchontoglires</taxon>
        <taxon>Glires</taxon>
        <taxon>Rodentia</taxon>
        <taxon>Myomorpha</taxon>
        <taxon>Muroidea</taxon>
        <taxon>Muridae</taxon>
        <taxon>Murinae</taxon>
        <taxon>Mus</taxon>
        <taxon>Mus</taxon>
    </lineage>
</organism>
<gene>
    <name type="primary">Ttc17</name>
</gene>
<reference key="1">
    <citation type="journal article" date="2009" name="PLoS Biol.">
        <title>Lineage-specific biology revealed by a finished genome assembly of the mouse.</title>
        <authorList>
            <person name="Church D.M."/>
            <person name="Goodstadt L."/>
            <person name="Hillier L.W."/>
            <person name="Zody M.C."/>
            <person name="Goldstein S."/>
            <person name="She X."/>
            <person name="Bult C.J."/>
            <person name="Agarwala R."/>
            <person name="Cherry J.L."/>
            <person name="DiCuccio M."/>
            <person name="Hlavina W."/>
            <person name="Kapustin Y."/>
            <person name="Meric P."/>
            <person name="Maglott D."/>
            <person name="Birtle Z."/>
            <person name="Marques A.C."/>
            <person name="Graves T."/>
            <person name="Zhou S."/>
            <person name="Teague B."/>
            <person name="Potamousis K."/>
            <person name="Churas C."/>
            <person name="Place M."/>
            <person name="Herschleb J."/>
            <person name="Runnheim R."/>
            <person name="Forrest D."/>
            <person name="Amos-Landgraf J."/>
            <person name="Schwartz D.C."/>
            <person name="Cheng Z."/>
            <person name="Lindblad-Toh K."/>
            <person name="Eichler E.E."/>
            <person name="Ponting C.P."/>
        </authorList>
    </citation>
    <scope>NUCLEOTIDE SEQUENCE [LARGE SCALE GENOMIC DNA]</scope>
    <source>
        <strain>C57BL/6J</strain>
    </source>
</reference>
<reference key="2">
    <citation type="journal article" date="2004" name="Genome Res.">
        <title>The status, quality, and expansion of the NIH full-length cDNA project: the Mammalian Gene Collection (MGC).</title>
        <authorList>
            <consortium name="The MGC Project Team"/>
        </authorList>
    </citation>
    <scope>NUCLEOTIDE SEQUENCE [LARGE SCALE MRNA] OF 469-1198 (ISOFORM 1)</scope>
    <scope>NUCLEOTIDE SEQUENCE [LARGE SCALE MRNA] OF 648-1198 (ISOFORM 2)</scope>
    <source>
        <strain>FVB/N</strain>
        <tissue>Mammary tumor</tissue>
    </source>
</reference>
<reference key="3">
    <citation type="journal article" date="2010" name="Cell">
        <title>A tissue-specific atlas of mouse protein phosphorylation and expression.</title>
        <authorList>
            <person name="Huttlin E.L."/>
            <person name="Jedrychowski M.P."/>
            <person name="Elias J.E."/>
            <person name="Goswami T."/>
            <person name="Rad R."/>
            <person name="Beausoleil S.A."/>
            <person name="Villen J."/>
            <person name="Haas W."/>
            <person name="Sowa M.E."/>
            <person name="Gygi S.P."/>
        </authorList>
    </citation>
    <scope>IDENTIFICATION BY MASS SPECTROMETRY [LARGE SCALE ANALYSIS]</scope>
    <source>
        <tissue>Lung</tissue>
    </source>
</reference>
<dbReference type="EMBL" id="AL672251">
    <property type="status" value="NOT_ANNOTATED_CDS"/>
    <property type="molecule type" value="Genomic_DNA"/>
</dbReference>
<dbReference type="EMBL" id="AL683878">
    <property type="status" value="NOT_ANNOTATED_CDS"/>
    <property type="molecule type" value="Genomic_DNA"/>
</dbReference>
<dbReference type="EMBL" id="BC061503">
    <property type="protein sequence ID" value="AAH61503.1"/>
    <property type="molecule type" value="mRNA"/>
</dbReference>
<dbReference type="EMBL" id="BC095993">
    <property type="protein sequence ID" value="AAH95993.1"/>
    <property type="molecule type" value="mRNA"/>
</dbReference>
<dbReference type="CCDS" id="CCDS38185.1">
    <molecule id="E9PVB5-1"/>
</dbReference>
<dbReference type="CCDS" id="CCDS89523.1">
    <molecule id="E9PVB5-2"/>
</dbReference>
<dbReference type="RefSeq" id="NP_001342619.1">
    <molecule id="E9PVB5-2"/>
    <property type="nucleotide sequence ID" value="NM_001355690.1"/>
</dbReference>
<dbReference type="RefSeq" id="NP_898929.2">
    <molecule id="E9PVB5-1"/>
    <property type="nucleotide sequence ID" value="NM_183106.2"/>
</dbReference>
<dbReference type="RefSeq" id="XP_006500374.1">
    <property type="nucleotide sequence ID" value="XM_006500311.3"/>
</dbReference>
<dbReference type="SMR" id="E9PVB5"/>
<dbReference type="BioGRID" id="216851">
    <property type="interactions" value="2"/>
</dbReference>
<dbReference type="FunCoup" id="E9PVB5">
    <property type="interactions" value="2358"/>
</dbReference>
<dbReference type="STRING" id="10090.ENSMUSP00000106869"/>
<dbReference type="GlyConnect" id="2762">
    <property type="glycosylation" value="1 N-Linked glycan (1 site)"/>
</dbReference>
<dbReference type="GlyCosmos" id="E9PVB5">
    <property type="glycosylation" value="1 site, 1 glycan"/>
</dbReference>
<dbReference type="GlyGen" id="E9PVB5">
    <property type="glycosylation" value="5 sites, 6 N-linked glycans (5 sites)"/>
</dbReference>
<dbReference type="iPTMnet" id="E9PVB5"/>
<dbReference type="PhosphoSitePlus" id="E9PVB5"/>
<dbReference type="PaxDb" id="10090-ENSMUSP00000106869"/>
<dbReference type="PeptideAtlas" id="E9PVB5"/>
<dbReference type="ProteomicsDB" id="300147">
    <molecule id="E9PVB5-1"/>
</dbReference>
<dbReference type="ProteomicsDB" id="300148">
    <molecule id="E9PVB5-2"/>
</dbReference>
<dbReference type="Pumba" id="E9PVB5"/>
<dbReference type="Antibodypedia" id="26045">
    <property type="antibodies" value="40 antibodies from 15 providers"/>
</dbReference>
<dbReference type="Ensembl" id="ENSMUST00000111237.9">
    <molecule id="E9PVB5-2"/>
    <property type="protein sequence ID" value="ENSMUSP00000106868.3"/>
    <property type="gene ID" value="ENSMUSG00000027194.17"/>
</dbReference>
<dbReference type="Ensembl" id="ENSMUST00000111238.8">
    <molecule id="E9PVB5-1"/>
    <property type="protein sequence ID" value="ENSMUSP00000106869.2"/>
    <property type="gene ID" value="ENSMUSG00000027194.17"/>
</dbReference>
<dbReference type="GeneID" id="74569"/>
<dbReference type="KEGG" id="mmu:74569"/>
<dbReference type="UCSC" id="uc008lgu.1">
    <molecule id="E9PVB5-1"/>
    <property type="organism name" value="mouse"/>
</dbReference>
<dbReference type="AGR" id="MGI:1921819"/>
<dbReference type="CTD" id="55761"/>
<dbReference type="MGI" id="MGI:1921819">
    <property type="gene designation" value="Ttc17"/>
</dbReference>
<dbReference type="VEuPathDB" id="HostDB:ENSMUSG00000027194"/>
<dbReference type="eggNOG" id="KOG4507">
    <property type="taxonomic scope" value="Eukaryota"/>
</dbReference>
<dbReference type="GeneTree" id="ENSGT00390000006196"/>
<dbReference type="HOGENOM" id="CLU_008510_0_0_1"/>
<dbReference type="InParanoid" id="E9PVB5"/>
<dbReference type="OMA" id="PDDHAKQ"/>
<dbReference type="OrthoDB" id="2115703at2759"/>
<dbReference type="PhylomeDB" id="E9PVB5"/>
<dbReference type="TreeFam" id="TF315005"/>
<dbReference type="BioGRID-ORCS" id="74569">
    <property type="hits" value="0 hits in 76 CRISPR screens"/>
</dbReference>
<dbReference type="ChiTaRS" id="Ttc17">
    <property type="organism name" value="mouse"/>
</dbReference>
<dbReference type="PRO" id="PR:E9PVB5"/>
<dbReference type="Proteomes" id="UP000000589">
    <property type="component" value="Chromosome 2"/>
</dbReference>
<dbReference type="RNAct" id="E9PVB5">
    <property type="molecule type" value="protein"/>
</dbReference>
<dbReference type="Bgee" id="ENSMUSG00000027194">
    <property type="expression patterns" value="Expressed in cardiac muscle of left ventricle and 245 other cell types or tissues"/>
</dbReference>
<dbReference type="ExpressionAtlas" id="E9PVB5">
    <property type="expression patterns" value="baseline and differential"/>
</dbReference>
<dbReference type="GO" id="GO:0015629">
    <property type="term" value="C:actin cytoskeleton"/>
    <property type="evidence" value="ECO:0007669"/>
    <property type="project" value="Ensembl"/>
</dbReference>
<dbReference type="GO" id="GO:0005829">
    <property type="term" value="C:cytosol"/>
    <property type="evidence" value="ECO:0007669"/>
    <property type="project" value="Ensembl"/>
</dbReference>
<dbReference type="GO" id="GO:0005886">
    <property type="term" value="C:plasma membrane"/>
    <property type="evidence" value="ECO:0007669"/>
    <property type="project" value="UniProtKB-SubCell"/>
</dbReference>
<dbReference type="GO" id="GO:0030041">
    <property type="term" value="P:actin filament polymerization"/>
    <property type="evidence" value="ECO:0007669"/>
    <property type="project" value="Ensembl"/>
</dbReference>
<dbReference type="GO" id="GO:0044782">
    <property type="term" value="P:cilium organization"/>
    <property type="evidence" value="ECO:0007669"/>
    <property type="project" value="Ensembl"/>
</dbReference>
<dbReference type="FunFam" id="1.25.40.10:FF:000053">
    <property type="entry name" value="Tetratricopeptide repeat domain 17"/>
    <property type="match status" value="1"/>
</dbReference>
<dbReference type="FunFam" id="1.25.40.10:FF:000061">
    <property type="entry name" value="Tetratricopeptide repeat domain 17"/>
    <property type="match status" value="1"/>
</dbReference>
<dbReference type="FunFam" id="1.25.40.10:FF:000111">
    <property type="entry name" value="tetratricopeptide repeat protein 17 isoform X1"/>
    <property type="match status" value="1"/>
</dbReference>
<dbReference type="Gene3D" id="1.25.40.10">
    <property type="entry name" value="Tetratricopeptide repeat domain"/>
    <property type="match status" value="3"/>
</dbReference>
<dbReference type="InterPro" id="IPR011990">
    <property type="entry name" value="TPR-like_helical_dom_sf"/>
</dbReference>
<dbReference type="InterPro" id="IPR019734">
    <property type="entry name" value="TPR_rpt"/>
</dbReference>
<dbReference type="InterPro" id="IPR052630">
    <property type="entry name" value="TTC17"/>
</dbReference>
<dbReference type="PANTHER" id="PTHR16091:SF1">
    <property type="entry name" value="TETRATRICOPEPTIDE REPEAT PROTEIN 17"/>
    <property type="match status" value="1"/>
</dbReference>
<dbReference type="PANTHER" id="PTHR16091">
    <property type="entry name" value="TTC17 PROTEIN"/>
    <property type="match status" value="1"/>
</dbReference>
<dbReference type="Pfam" id="PF13181">
    <property type="entry name" value="TPR_8"/>
    <property type="match status" value="2"/>
</dbReference>
<dbReference type="SMART" id="SM00028">
    <property type="entry name" value="TPR"/>
    <property type="match status" value="6"/>
</dbReference>
<dbReference type="SUPFAM" id="SSF48452">
    <property type="entry name" value="TPR-like"/>
    <property type="match status" value="1"/>
</dbReference>
<dbReference type="PROSITE" id="PS50005">
    <property type="entry name" value="TPR"/>
    <property type="match status" value="4"/>
</dbReference>
<dbReference type="PROSITE" id="PS50293">
    <property type="entry name" value="TPR_REGION"/>
    <property type="match status" value="3"/>
</dbReference>
<evidence type="ECO:0000250" key="1"/>
<evidence type="ECO:0000255" key="2"/>
<evidence type="ECO:0000256" key="3">
    <source>
        <dbReference type="SAM" id="MobiDB-lite"/>
    </source>
</evidence>
<evidence type="ECO:0000303" key="4">
    <source>
    </source>
</evidence>
<evidence type="ECO:0000305" key="5"/>
<sequence>MAAAIGVRGRFELLPRSGPGWLLSLSALLSVVARGALATTHWVVTEDGKIQQQVDSPMNLKHPHDLVILMRQETTVNYLKELEKQLVAQKIHIEENEDRDTGLEQRHNKEDPDCIKAKVPLGDLDLYDGTYITLESKDIRPEDFIDTESPVPPDPEQPDCTKILELPYSIHAFQHLRGVQERVNLSAPLLPKEDPIFTYLSKRLGRSIDDIGHLIHEGLQKNASSWVLYNLASFYWRIKNEPYQVVECAMRALHFSSRHNKDIALVNLANVLHRAHFSADAAVVVHAALDDSDFFTSYYTLGNIYAMLGEYNHSVLCYDHALQAKPGFEQAIKRKHAVLCQQKLEQKLEAQHRSLQRTLNELKEYQKQHDHYLRQQEILEKHKLIQEEQILRNIIHETQMAKEAQLGNHQICRLVNQQHSLHCQWDQPVRYHRGDIFENVDYVQFGDDSSTSSMMSVNFDVPTNQSDVSESVRSSPVAHSVLWVWGRDSDAYRDKQHILWPKRADCTDSYPRVPLGGELPTYFLPPENKGLRIHELTSDDYSSEEEAQPPDCSITDYRKSHTLSYLVKELEVRMDLKAKIPDDHARKILLSRIKNYTVPEEEIGSFLFHAINKPNAPVWLILNEAGLYWRAVGNSTFAIACLQRALNLAPVQYQDIPLVNLANLLIHYGLHLDATKLLLQAVAVNSSEPLTFLSLGNAYLALKNVSGALEAFRQALKLSTKCPECESSLKLIRCMQFYPFLYNATSSVCGGHCHEKPLDNSHDKQKYFAKPQSLDAAAEEPSGHGADEDPVLSVENAGRDSDALRLESTVVEESNGSDEVEKSDETKMSEEILALVDEFQQAWPLEGFGGTLEMKGRRLDLQGIRVLKKGPQDGVAKSSCYGDCRSEDDEATEWITFQVKRVKKPKGDHKKPPGKKVEASQAENGQRYQANLEITGPKVASPGPQEKKRDYQSLGWPSPDECLKLRWVELTAIVSTWLAVSSKNIDITEHIDFATPIQQPAMEPLCNGNLPTSMHTLDHLHGVSNRASLHYTGESQLTEVLQNLGKDQYPQQSLEQIGTRIAKVLEKNQTSWVLSSMAALYWRVKGQGKKAIDCLRQALHYAPHQMKDVPLISLANILHNAKLWNDAVIVATMAVEIAPHFAVNHFTLGNVYVAMEEFEKALVWYESTLKLQPEFVPAKNRIQTIQCHLMLKKGRRSP</sequence>
<comment type="function">
    <text evidence="1">Plays a role in primary ciliogenesis by modulating actin polymerization.</text>
</comment>
<comment type="subunit">
    <text evidence="1">Interacts with CATIP.</text>
</comment>
<comment type="subcellular location">
    <subcellularLocation>
        <location evidence="1">Cytoplasm</location>
    </subcellularLocation>
    <subcellularLocation>
        <location evidence="1">Cell membrane</location>
    </subcellularLocation>
    <subcellularLocation>
        <location evidence="1">Cytoplasm</location>
        <location evidence="1">Cytoskeleton</location>
    </subcellularLocation>
    <text evidence="1">Localized with CATIP at F-actin rich zones and at dynamic plasma membrane protrusions.</text>
</comment>
<comment type="alternative products">
    <event type="alternative splicing"/>
    <isoform>
        <id>E9PVB5-1</id>
        <name>1</name>
        <sequence type="displayed"/>
    </isoform>
    <isoform>
        <id>E9PVB5-2</id>
        <name>2</name>
        <sequence type="described" ref="VSP_053920"/>
    </isoform>
</comment>
<comment type="similarity">
    <text evidence="5">Belongs to the TTC17 family.</text>
</comment>
<keyword id="KW-0025">Alternative splicing</keyword>
<keyword id="KW-1003">Cell membrane</keyword>
<keyword id="KW-0970">Cilium biogenesis/degradation</keyword>
<keyword id="KW-0175">Coiled coil</keyword>
<keyword id="KW-0963">Cytoplasm</keyword>
<keyword id="KW-0206">Cytoskeleton</keyword>
<keyword id="KW-0472">Membrane</keyword>
<keyword id="KW-1185">Reference proteome</keyword>
<keyword id="KW-0677">Repeat</keyword>
<keyword id="KW-0802">TPR repeat</keyword>
<accession>E9PVB5</accession>
<accession>Q4VBE5</accession>
<accession>Q5RKR1</accession>